<name>HPS3_PITAZ</name>
<keyword id="KW-0903">Direct protein sequencing</keyword>
<keyword id="KW-0964">Secreted</keyword>
<protein>
    <recommendedName>
        <fullName evidence="3">Hyposin-H3</fullName>
        <shortName evidence="3">HPS-H3</shortName>
    </recommendedName>
    <alternativeName>
        <fullName evidence="2">Hyposin-5</fullName>
    </alternativeName>
    <alternativeName>
        <fullName evidence="2">Hyposin-HA5</fullName>
    </alternativeName>
</protein>
<organism>
    <name type="scientific">Pithecopus azureus</name>
    <name type="common">Orange-legged monkey tree frog</name>
    <name type="synonym">Phyllomedusa azurea</name>
    <dbReference type="NCBI Taxonomy" id="2034991"/>
    <lineage>
        <taxon>Eukaryota</taxon>
        <taxon>Metazoa</taxon>
        <taxon>Chordata</taxon>
        <taxon>Craniata</taxon>
        <taxon>Vertebrata</taxon>
        <taxon>Euteleostomi</taxon>
        <taxon>Amphibia</taxon>
        <taxon>Batrachia</taxon>
        <taxon>Anura</taxon>
        <taxon>Neobatrachia</taxon>
        <taxon>Hyloidea</taxon>
        <taxon>Hylidae</taxon>
        <taxon>Phyllomedusinae</taxon>
        <taxon>Pithecopus</taxon>
    </lineage>
</organism>
<reference evidence="4" key="1">
    <citation type="journal article" date="2007" name="J. Proteome Res.">
        <title>Amphibian skin secretomics: application of parallel quadrupole time-of-flight mass spectrometry and peptide precursor cDNA cloning to rapidly characterize the skin secretory peptidome of Phyllomedusa hypochondrialis azurea: discovery of a novel peptide family, the hyposins.</title>
        <authorList>
            <person name="Thompson A.H."/>
            <person name="Bjourson A.J."/>
            <person name="Orr D.F."/>
            <person name="Shaw C."/>
            <person name="McClean S."/>
        </authorList>
    </citation>
    <scope>PROTEIN SEQUENCE</scope>
    <scope>SUBCELLULAR LOCATION</scope>
    <scope>TISSUE SPECIFICITY</scope>
    <scope>MASS SPECTROMETRY</scope>
    <source>
        <tissue evidence="1">Skin secretion</tissue>
    </source>
</reference>
<reference key="2">
    <citation type="journal article" date="2008" name="Peptides">
        <title>A consistent nomenclature of antimicrobial peptides isolated from frogs of the subfamily Phyllomedusinae.</title>
        <authorList>
            <person name="Amiche M."/>
            <person name="Ladram A."/>
            <person name="Nicolas P."/>
        </authorList>
    </citation>
    <scope>NOMENCLATURE</scope>
</reference>
<evidence type="ECO:0000269" key="1">
    <source>
    </source>
</evidence>
<evidence type="ECO:0000303" key="2">
    <source>
    </source>
</evidence>
<evidence type="ECO:0000303" key="3">
    <source>
    </source>
</evidence>
<evidence type="ECO:0000305" key="4"/>
<sequence>LGPALITRKPLKGKP</sequence>
<proteinExistence type="evidence at protein level"/>
<dbReference type="GO" id="GO:0005576">
    <property type="term" value="C:extracellular region"/>
    <property type="evidence" value="ECO:0007669"/>
    <property type="project" value="UniProtKB-SubCell"/>
</dbReference>
<comment type="subcellular location">
    <subcellularLocation>
        <location evidence="1">Secreted</location>
    </subcellularLocation>
</comment>
<comment type="tissue specificity">
    <text evidence="1">Expressed by the skin glands.</text>
</comment>
<comment type="mass spectrometry"/>
<comment type="similarity">
    <text evidence="4">Belongs to the frog skin active peptide (FSAP) family. Hyposin subfamily.</text>
</comment>
<comment type="online information" name="The antimicrobial peptide database">
    <link uri="https://wangapd3.com/database/query_output.php?ID=00904"/>
</comment>
<accession>P84958</accession>
<feature type="peptide" id="PRO_0000250433" description="Hyposin-H3" evidence="1">
    <location>
        <begin position="1"/>
        <end position="15"/>
    </location>
</feature>